<protein>
    <recommendedName>
        <fullName evidence="1">Ribose import ATP-binding protein RbsA 2</fullName>
        <ecNumber evidence="1">7.5.2.7</ecNumber>
    </recommendedName>
</protein>
<dbReference type="EC" id="7.5.2.7" evidence="1"/>
<dbReference type="EMBL" id="AL591985">
    <property type="protein sequence ID" value="CAC48885.1"/>
    <property type="molecule type" value="Genomic_DNA"/>
</dbReference>
<dbReference type="PIR" id="E95902">
    <property type="entry name" value="E95902"/>
</dbReference>
<dbReference type="RefSeq" id="NP_437025.1">
    <property type="nucleotide sequence ID" value="NC_003078.1"/>
</dbReference>
<dbReference type="RefSeq" id="WP_010975364.1">
    <property type="nucleotide sequence ID" value="NC_003078.1"/>
</dbReference>
<dbReference type="SMR" id="Q92W60"/>
<dbReference type="DNASU" id="1236816"/>
<dbReference type="EnsemblBacteria" id="CAC48885">
    <property type="protein sequence ID" value="CAC48885"/>
    <property type="gene ID" value="SM_b20503"/>
</dbReference>
<dbReference type="KEGG" id="sme:SM_b20503"/>
<dbReference type="PATRIC" id="fig|266834.11.peg.5417"/>
<dbReference type="eggNOG" id="COG1129">
    <property type="taxonomic scope" value="Bacteria"/>
</dbReference>
<dbReference type="HOGENOM" id="CLU_000604_92_3_5"/>
<dbReference type="OrthoDB" id="9805029at2"/>
<dbReference type="Proteomes" id="UP000001976">
    <property type="component" value="Plasmid pSymB"/>
</dbReference>
<dbReference type="GO" id="GO:0005886">
    <property type="term" value="C:plasma membrane"/>
    <property type="evidence" value="ECO:0007669"/>
    <property type="project" value="UniProtKB-SubCell"/>
</dbReference>
<dbReference type="GO" id="GO:0015611">
    <property type="term" value="F:ABC-type D-ribose transporter activity"/>
    <property type="evidence" value="ECO:0007669"/>
    <property type="project" value="UniProtKB-EC"/>
</dbReference>
<dbReference type="GO" id="GO:0005524">
    <property type="term" value="F:ATP binding"/>
    <property type="evidence" value="ECO:0007669"/>
    <property type="project" value="UniProtKB-KW"/>
</dbReference>
<dbReference type="GO" id="GO:0016887">
    <property type="term" value="F:ATP hydrolysis activity"/>
    <property type="evidence" value="ECO:0007669"/>
    <property type="project" value="InterPro"/>
</dbReference>
<dbReference type="CDD" id="cd03216">
    <property type="entry name" value="ABC_Carb_Monos_I"/>
    <property type="match status" value="1"/>
</dbReference>
<dbReference type="CDD" id="cd03215">
    <property type="entry name" value="ABC_Carb_Monos_II"/>
    <property type="match status" value="1"/>
</dbReference>
<dbReference type="FunFam" id="3.40.50.300:FF:000127">
    <property type="entry name" value="Ribose import ATP-binding protein RbsA"/>
    <property type="match status" value="1"/>
</dbReference>
<dbReference type="Gene3D" id="3.40.50.300">
    <property type="entry name" value="P-loop containing nucleotide triphosphate hydrolases"/>
    <property type="match status" value="2"/>
</dbReference>
<dbReference type="InterPro" id="IPR003593">
    <property type="entry name" value="AAA+_ATPase"/>
</dbReference>
<dbReference type="InterPro" id="IPR050107">
    <property type="entry name" value="ABC_carbohydrate_import_ATPase"/>
</dbReference>
<dbReference type="InterPro" id="IPR003439">
    <property type="entry name" value="ABC_transporter-like_ATP-bd"/>
</dbReference>
<dbReference type="InterPro" id="IPR017871">
    <property type="entry name" value="ABC_transporter-like_CS"/>
</dbReference>
<dbReference type="InterPro" id="IPR027417">
    <property type="entry name" value="P-loop_NTPase"/>
</dbReference>
<dbReference type="PANTHER" id="PTHR43790">
    <property type="entry name" value="CARBOHYDRATE TRANSPORT ATP-BINDING PROTEIN MG119-RELATED"/>
    <property type="match status" value="1"/>
</dbReference>
<dbReference type="PANTHER" id="PTHR43790:SF9">
    <property type="entry name" value="GALACTOFURANOSE TRANSPORTER ATP-BINDING PROTEIN YTFR"/>
    <property type="match status" value="1"/>
</dbReference>
<dbReference type="Pfam" id="PF00005">
    <property type="entry name" value="ABC_tran"/>
    <property type="match status" value="2"/>
</dbReference>
<dbReference type="SMART" id="SM00382">
    <property type="entry name" value="AAA"/>
    <property type="match status" value="2"/>
</dbReference>
<dbReference type="SUPFAM" id="SSF52540">
    <property type="entry name" value="P-loop containing nucleoside triphosphate hydrolases"/>
    <property type="match status" value="2"/>
</dbReference>
<dbReference type="PROSITE" id="PS00211">
    <property type="entry name" value="ABC_TRANSPORTER_1"/>
    <property type="match status" value="1"/>
</dbReference>
<dbReference type="PROSITE" id="PS50893">
    <property type="entry name" value="ABC_TRANSPORTER_2"/>
    <property type="match status" value="2"/>
</dbReference>
<dbReference type="PROSITE" id="PS51254">
    <property type="entry name" value="RBSA"/>
    <property type="match status" value="1"/>
</dbReference>
<organism>
    <name type="scientific">Rhizobium meliloti (strain 1021)</name>
    <name type="common">Ensifer meliloti</name>
    <name type="synonym">Sinorhizobium meliloti</name>
    <dbReference type="NCBI Taxonomy" id="266834"/>
    <lineage>
        <taxon>Bacteria</taxon>
        <taxon>Pseudomonadati</taxon>
        <taxon>Pseudomonadota</taxon>
        <taxon>Alphaproteobacteria</taxon>
        <taxon>Hyphomicrobiales</taxon>
        <taxon>Rhizobiaceae</taxon>
        <taxon>Sinorhizobium/Ensifer group</taxon>
        <taxon>Sinorhizobium</taxon>
    </lineage>
</organism>
<accession>Q92W60</accession>
<name>RBSA2_RHIME</name>
<evidence type="ECO:0000255" key="1">
    <source>
        <dbReference type="HAMAP-Rule" id="MF_01716"/>
    </source>
</evidence>
<gene>
    <name evidence="1" type="primary">rbsA2</name>
    <name type="ordered locus">RB0485</name>
    <name type="ORF">SMb20503</name>
</gene>
<comment type="function">
    <text evidence="1">Part of the ABC transporter complex RbsABC involved in ribose import. Responsible for energy coupling to the transport system.</text>
</comment>
<comment type="catalytic activity">
    <reaction evidence="1">
        <text>D-ribose(out) + ATP + H2O = D-ribose(in) + ADP + phosphate + H(+)</text>
        <dbReference type="Rhea" id="RHEA:29903"/>
        <dbReference type="ChEBI" id="CHEBI:15377"/>
        <dbReference type="ChEBI" id="CHEBI:15378"/>
        <dbReference type="ChEBI" id="CHEBI:30616"/>
        <dbReference type="ChEBI" id="CHEBI:43474"/>
        <dbReference type="ChEBI" id="CHEBI:47013"/>
        <dbReference type="ChEBI" id="CHEBI:456216"/>
        <dbReference type="EC" id="7.5.2.7"/>
    </reaction>
</comment>
<comment type="subunit">
    <text evidence="1">The complex is composed of an ATP-binding protein (RbsA), two transmembrane proteins (RbsC) and a solute-binding protein (RbsB).</text>
</comment>
<comment type="subcellular location">
    <subcellularLocation>
        <location evidence="1">Cell inner membrane</location>
        <topology evidence="1">Peripheral membrane protein</topology>
    </subcellularLocation>
</comment>
<comment type="similarity">
    <text evidence="1">Belongs to the ABC transporter superfamily. Ribose importer (TC 3.A.1.2.1) family.</text>
</comment>
<geneLocation type="plasmid">
    <name>pSymB</name>
    <name>megaplasmid 2</name>
</geneLocation>
<keyword id="KW-0067">ATP-binding</keyword>
<keyword id="KW-0997">Cell inner membrane</keyword>
<keyword id="KW-1003">Cell membrane</keyword>
<keyword id="KW-0472">Membrane</keyword>
<keyword id="KW-0547">Nucleotide-binding</keyword>
<keyword id="KW-0614">Plasmid</keyword>
<keyword id="KW-1185">Reference proteome</keyword>
<keyword id="KW-0677">Repeat</keyword>
<keyword id="KW-0762">Sugar transport</keyword>
<keyword id="KW-1278">Translocase</keyword>
<keyword id="KW-0813">Transport</keyword>
<reference key="1">
    <citation type="journal article" date="2001" name="Proc. Natl. Acad. Sci. U.S.A.">
        <title>The complete sequence of the 1,683-kb pSymB megaplasmid from the N2-fixing endosymbiont Sinorhizobium meliloti.</title>
        <authorList>
            <person name="Finan T.M."/>
            <person name="Weidner S."/>
            <person name="Wong K."/>
            <person name="Buhrmester J."/>
            <person name="Chain P."/>
            <person name="Vorhoelter F.J."/>
            <person name="Hernandez-Lucas I."/>
            <person name="Becker A."/>
            <person name="Cowie A."/>
            <person name="Gouzy J."/>
            <person name="Golding B."/>
            <person name="Puehler A."/>
        </authorList>
    </citation>
    <scope>NUCLEOTIDE SEQUENCE [LARGE SCALE GENOMIC DNA]</scope>
    <source>
        <strain>1021</strain>
    </source>
</reference>
<reference key="2">
    <citation type="journal article" date="2001" name="Science">
        <title>The composite genome of the legume symbiont Sinorhizobium meliloti.</title>
        <authorList>
            <person name="Galibert F."/>
            <person name="Finan T.M."/>
            <person name="Long S.R."/>
            <person name="Puehler A."/>
            <person name="Abola P."/>
            <person name="Ampe F."/>
            <person name="Barloy-Hubler F."/>
            <person name="Barnett M.J."/>
            <person name="Becker A."/>
            <person name="Boistard P."/>
            <person name="Bothe G."/>
            <person name="Boutry M."/>
            <person name="Bowser L."/>
            <person name="Buhrmester J."/>
            <person name="Cadieu E."/>
            <person name="Capela D."/>
            <person name="Chain P."/>
            <person name="Cowie A."/>
            <person name="Davis R.W."/>
            <person name="Dreano S."/>
            <person name="Federspiel N.A."/>
            <person name="Fisher R.F."/>
            <person name="Gloux S."/>
            <person name="Godrie T."/>
            <person name="Goffeau A."/>
            <person name="Golding B."/>
            <person name="Gouzy J."/>
            <person name="Gurjal M."/>
            <person name="Hernandez-Lucas I."/>
            <person name="Hong A."/>
            <person name="Huizar L."/>
            <person name="Hyman R.W."/>
            <person name="Jones T."/>
            <person name="Kahn D."/>
            <person name="Kahn M.L."/>
            <person name="Kalman S."/>
            <person name="Keating D.H."/>
            <person name="Kiss E."/>
            <person name="Komp C."/>
            <person name="Lelaure V."/>
            <person name="Masuy D."/>
            <person name="Palm C."/>
            <person name="Peck M.C."/>
            <person name="Pohl T.M."/>
            <person name="Portetelle D."/>
            <person name="Purnelle B."/>
            <person name="Ramsperger U."/>
            <person name="Surzycki R."/>
            <person name="Thebault P."/>
            <person name="Vandenbol M."/>
            <person name="Vorhoelter F.J."/>
            <person name="Weidner S."/>
            <person name="Wells D.H."/>
            <person name="Wong K."/>
            <person name="Yeh K.-C."/>
            <person name="Batut J."/>
        </authorList>
    </citation>
    <scope>NUCLEOTIDE SEQUENCE [LARGE SCALE GENOMIC DNA]</scope>
    <source>
        <strain>1021</strain>
    </source>
</reference>
<feature type="chain" id="PRO_0000261089" description="Ribose import ATP-binding protein RbsA 2">
    <location>
        <begin position="1"/>
        <end position="512"/>
    </location>
</feature>
<feature type="domain" description="ABC transporter 1" evidence="1">
    <location>
        <begin position="7"/>
        <end position="242"/>
    </location>
</feature>
<feature type="domain" description="ABC transporter 2" evidence="1">
    <location>
        <begin position="257"/>
        <end position="498"/>
    </location>
</feature>
<feature type="binding site" evidence="1">
    <location>
        <begin position="39"/>
        <end position="46"/>
    </location>
    <ligand>
        <name>ATP</name>
        <dbReference type="ChEBI" id="CHEBI:30616"/>
    </ligand>
</feature>
<proteinExistence type="inferred from homology"/>
<sequence>MTSETVLEIRNVSKHFGAVKALTAVDFRLARGEVHALCGENGAGKSTLMNVIAGVLQPSEGEVLIEGAPVKIASPAVAQSLGIALVHQEIALCPDATIAENMFMAATNRRRSALMNYAQLERDAQAVMNRLAPIDVSQKVGDLPISSQQLVEIAKALTLDCRVLIFDEPTAALTETEAQVLFGIIRDLKARGISIIYISHRMAEVFSLCDRVTVFRDGRYVATEMVSDVTPDDVVRLMVGREISQLYPDKQPSSERLGEPILSVRDLGGERFRDVSFELRYGEILGVGGLIGSGRTEIAEGICALRPVTQGEIRLHDKVLRLRRYSDAAKAGVVYLSEDRKGSGVFLDLSIAQNIAALDLKALTSLGLLNSREERALAEDLTRRLGVRMGGVDMPVSSLSGGNQQKVAIAKQLAVDPKVILMDEPTRGIDVGAKSEIHRLLRELARAGIGILVISSELPELIGLCDRVLVVREGRIAGEVSGNEMTEEVIMRLASGIGPATETNLKASGHAA</sequence>